<gene>
    <name evidence="1" type="primary">rpmG</name>
    <name type="ordered locus">LBA1508</name>
</gene>
<dbReference type="EMBL" id="CP000033">
    <property type="protein sequence ID" value="AAV43327.1"/>
    <property type="molecule type" value="Genomic_DNA"/>
</dbReference>
<dbReference type="RefSeq" id="WP_003548272.1">
    <property type="nucleotide sequence ID" value="NC_006814.3"/>
</dbReference>
<dbReference type="RefSeq" id="YP_194358.1">
    <property type="nucleotide sequence ID" value="NC_006814.3"/>
</dbReference>
<dbReference type="SMR" id="Q5FIZ7"/>
<dbReference type="STRING" id="272621.LBA1508"/>
<dbReference type="GeneID" id="93289423"/>
<dbReference type="KEGG" id="lac:LBA1508"/>
<dbReference type="PATRIC" id="fig|272621.13.peg.1430"/>
<dbReference type="eggNOG" id="COG0267">
    <property type="taxonomic scope" value="Bacteria"/>
</dbReference>
<dbReference type="HOGENOM" id="CLU_190949_0_2_9"/>
<dbReference type="OrthoDB" id="197660at2"/>
<dbReference type="BioCyc" id="LACI272621:G1G49-1476-MONOMER"/>
<dbReference type="PRO" id="PR:Q5FIZ7"/>
<dbReference type="Proteomes" id="UP000006381">
    <property type="component" value="Chromosome"/>
</dbReference>
<dbReference type="GO" id="GO:0005737">
    <property type="term" value="C:cytoplasm"/>
    <property type="evidence" value="ECO:0007669"/>
    <property type="project" value="UniProtKB-ARBA"/>
</dbReference>
<dbReference type="GO" id="GO:1990904">
    <property type="term" value="C:ribonucleoprotein complex"/>
    <property type="evidence" value="ECO:0007669"/>
    <property type="project" value="UniProtKB-KW"/>
</dbReference>
<dbReference type="GO" id="GO:0005840">
    <property type="term" value="C:ribosome"/>
    <property type="evidence" value="ECO:0007669"/>
    <property type="project" value="UniProtKB-KW"/>
</dbReference>
<dbReference type="GO" id="GO:0003735">
    <property type="term" value="F:structural constituent of ribosome"/>
    <property type="evidence" value="ECO:0007669"/>
    <property type="project" value="InterPro"/>
</dbReference>
<dbReference type="GO" id="GO:0006412">
    <property type="term" value="P:translation"/>
    <property type="evidence" value="ECO:0007669"/>
    <property type="project" value="UniProtKB-UniRule"/>
</dbReference>
<dbReference type="Gene3D" id="2.20.28.120">
    <property type="entry name" value="Ribosomal protein L33"/>
    <property type="match status" value="1"/>
</dbReference>
<dbReference type="HAMAP" id="MF_00294">
    <property type="entry name" value="Ribosomal_bL33"/>
    <property type="match status" value="1"/>
</dbReference>
<dbReference type="InterPro" id="IPR001705">
    <property type="entry name" value="Ribosomal_bL33"/>
</dbReference>
<dbReference type="InterPro" id="IPR018264">
    <property type="entry name" value="Ribosomal_bL33_CS"/>
</dbReference>
<dbReference type="InterPro" id="IPR038584">
    <property type="entry name" value="Ribosomal_bL33_sf"/>
</dbReference>
<dbReference type="InterPro" id="IPR011332">
    <property type="entry name" value="Ribosomal_zn-bd"/>
</dbReference>
<dbReference type="NCBIfam" id="NF001764">
    <property type="entry name" value="PRK00504.1"/>
    <property type="match status" value="1"/>
</dbReference>
<dbReference type="NCBIfam" id="NF001860">
    <property type="entry name" value="PRK00595.1"/>
    <property type="match status" value="1"/>
</dbReference>
<dbReference type="NCBIfam" id="TIGR01023">
    <property type="entry name" value="rpmG_bact"/>
    <property type="match status" value="1"/>
</dbReference>
<dbReference type="PANTHER" id="PTHR43168">
    <property type="entry name" value="50S RIBOSOMAL PROTEIN L33, CHLOROPLASTIC"/>
    <property type="match status" value="1"/>
</dbReference>
<dbReference type="PANTHER" id="PTHR43168:SF2">
    <property type="entry name" value="LARGE RIBOSOMAL SUBUNIT PROTEIN BL33C"/>
    <property type="match status" value="1"/>
</dbReference>
<dbReference type="Pfam" id="PF00471">
    <property type="entry name" value="Ribosomal_L33"/>
    <property type="match status" value="1"/>
</dbReference>
<dbReference type="SUPFAM" id="SSF57829">
    <property type="entry name" value="Zn-binding ribosomal proteins"/>
    <property type="match status" value="1"/>
</dbReference>
<dbReference type="PROSITE" id="PS00582">
    <property type="entry name" value="RIBOSOMAL_L33"/>
    <property type="match status" value="1"/>
</dbReference>
<feature type="chain" id="PRO_0000356491" description="Large ribosomal subunit protein bL33">
    <location>
        <begin position="1"/>
        <end position="49"/>
    </location>
</feature>
<protein>
    <recommendedName>
        <fullName evidence="1">Large ribosomal subunit protein bL33</fullName>
    </recommendedName>
    <alternativeName>
        <fullName evidence="2">50S ribosomal protein L33</fullName>
    </alternativeName>
</protein>
<keyword id="KW-1185">Reference proteome</keyword>
<keyword id="KW-0687">Ribonucleoprotein</keyword>
<keyword id="KW-0689">Ribosomal protein</keyword>
<name>RL33_LACAC</name>
<accession>Q5FIZ7</accession>
<comment type="similarity">
    <text evidence="1">Belongs to the bacterial ribosomal protein bL33 family.</text>
</comment>
<organism>
    <name type="scientific">Lactobacillus acidophilus (strain ATCC 700396 / NCK56 / N2 / NCFM)</name>
    <dbReference type="NCBI Taxonomy" id="272621"/>
    <lineage>
        <taxon>Bacteria</taxon>
        <taxon>Bacillati</taxon>
        <taxon>Bacillota</taxon>
        <taxon>Bacilli</taxon>
        <taxon>Lactobacillales</taxon>
        <taxon>Lactobacillaceae</taxon>
        <taxon>Lactobacillus</taxon>
    </lineage>
</organism>
<evidence type="ECO:0000255" key="1">
    <source>
        <dbReference type="HAMAP-Rule" id="MF_00294"/>
    </source>
</evidence>
<evidence type="ECO:0000305" key="2"/>
<proteinExistence type="inferred from homology"/>
<reference key="1">
    <citation type="journal article" date="2005" name="Proc. Natl. Acad. Sci. U.S.A.">
        <title>Complete genome sequence of the probiotic lactic acid bacterium Lactobacillus acidophilus NCFM.</title>
        <authorList>
            <person name="Altermann E."/>
            <person name="Russell W.M."/>
            <person name="Azcarate-Peril M.A."/>
            <person name="Barrangou R."/>
            <person name="Buck B.L."/>
            <person name="McAuliffe O."/>
            <person name="Souther N."/>
            <person name="Dobson A."/>
            <person name="Duong T."/>
            <person name="Callanan M."/>
            <person name="Lick S."/>
            <person name="Hamrick A."/>
            <person name="Cano R."/>
            <person name="Klaenhammer T.R."/>
        </authorList>
    </citation>
    <scope>NUCLEOTIDE SEQUENCE [LARGE SCALE GENOMIC DNA]</scope>
    <source>
        <strain>ATCC 700396 / NCK56 / N2 / NCFM</strain>
    </source>
</reference>
<sequence length="49" mass="5847">MADNIILECTECGDRSYLSKKNKRKHPERLSLKKYCPVERRATLHRETK</sequence>